<gene>
    <name type="ordered locus">SAS1797</name>
</gene>
<protein>
    <recommendedName>
        <fullName>Uncharacterized protein SAS1797</fullName>
    </recommendedName>
</protein>
<accession>Q6G859</accession>
<dbReference type="EMBL" id="BX571857">
    <property type="protein sequence ID" value="CAG43602.1"/>
    <property type="molecule type" value="Genomic_DNA"/>
</dbReference>
<dbReference type="RefSeq" id="WP_000163283.1">
    <property type="nucleotide sequence ID" value="NC_002953.3"/>
</dbReference>
<dbReference type="SMR" id="Q6G859"/>
<dbReference type="MEROPS" id="C56.001"/>
<dbReference type="KEGG" id="sas:SAS1797"/>
<dbReference type="HOGENOM" id="CLU_000445_44_4_9"/>
<dbReference type="CDD" id="cd03134">
    <property type="entry name" value="GATase1_PfpI_like"/>
    <property type="match status" value="1"/>
</dbReference>
<dbReference type="Gene3D" id="3.40.50.880">
    <property type="match status" value="1"/>
</dbReference>
<dbReference type="InterPro" id="IPR006286">
    <property type="entry name" value="C56_PfpI-like"/>
</dbReference>
<dbReference type="InterPro" id="IPR029062">
    <property type="entry name" value="Class_I_gatase-like"/>
</dbReference>
<dbReference type="InterPro" id="IPR002818">
    <property type="entry name" value="DJ-1/PfpI"/>
</dbReference>
<dbReference type="NCBIfam" id="TIGR01382">
    <property type="entry name" value="PfpI"/>
    <property type="match status" value="1"/>
</dbReference>
<dbReference type="PANTHER" id="PTHR42733">
    <property type="entry name" value="DJ-1 PROTEIN"/>
    <property type="match status" value="1"/>
</dbReference>
<dbReference type="PANTHER" id="PTHR42733:SF2">
    <property type="entry name" value="DJ-1_THIJ_PFPI FAMILY PROTEIN"/>
    <property type="match status" value="1"/>
</dbReference>
<dbReference type="Pfam" id="PF01965">
    <property type="entry name" value="DJ-1_PfpI"/>
    <property type="match status" value="1"/>
</dbReference>
<dbReference type="SUPFAM" id="SSF52317">
    <property type="entry name" value="Class I glutamine amidotransferase-like"/>
    <property type="match status" value="1"/>
</dbReference>
<dbReference type="PROSITE" id="PS51276">
    <property type="entry name" value="PEPTIDASE_C56_PFPI"/>
    <property type="match status" value="1"/>
</dbReference>
<name>Y1797_STAAS</name>
<sequence>MTKKVAIILANEFEDIEYSSPKEALENAGFNTVVIGDTANSEVVGKHGEKVTVDVGIAEAKPEDYDALLIPGGFSPDHLRGDTEGRYGTFAKYFTKNDVPTFAICHGPQILIDTDDLKGRTLTAVLNVRKDLSNAGAHVVDESVVVDNNIVTSRVPDDLDDFNREIVKQLQ</sequence>
<reference key="1">
    <citation type="journal article" date="2004" name="Proc. Natl. Acad. Sci. U.S.A.">
        <title>Complete genomes of two clinical Staphylococcus aureus strains: evidence for the rapid evolution of virulence and drug resistance.</title>
        <authorList>
            <person name="Holden M.T.G."/>
            <person name="Feil E.J."/>
            <person name="Lindsay J.A."/>
            <person name="Peacock S.J."/>
            <person name="Day N.P.J."/>
            <person name="Enright M.C."/>
            <person name="Foster T.J."/>
            <person name="Moore C.E."/>
            <person name="Hurst L."/>
            <person name="Atkin R."/>
            <person name="Barron A."/>
            <person name="Bason N."/>
            <person name="Bentley S.D."/>
            <person name="Chillingworth C."/>
            <person name="Chillingworth T."/>
            <person name="Churcher C."/>
            <person name="Clark L."/>
            <person name="Corton C."/>
            <person name="Cronin A."/>
            <person name="Doggett J."/>
            <person name="Dowd L."/>
            <person name="Feltwell T."/>
            <person name="Hance Z."/>
            <person name="Harris B."/>
            <person name="Hauser H."/>
            <person name="Holroyd S."/>
            <person name="Jagels K."/>
            <person name="James K.D."/>
            <person name="Lennard N."/>
            <person name="Line A."/>
            <person name="Mayes R."/>
            <person name="Moule S."/>
            <person name="Mungall K."/>
            <person name="Ormond D."/>
            <person name="Quail M.A."/>
            <person name="Rabbinowitsch E."/>
            <person name="Rutherford K.M."/>
            <person name="Sanders M."/>
            <person name="Sharp S."/>
            <person name="Simmonds M."/>
            <person name="Stevens K."/>
            <person name="Whitehead S."/>
            <person name="Barrell B.G."/>
            <person name="Spratt B.G."/>
            <person name="Parkhill J."/>
        </authorList>
    </citation>
    <scope>NUCLEOTIDE SEQUENCE [LARGE SCALE GENOMIC DNA]</scope>
    <source>
        <strain>MSSA476</strain>
    </source>
</reference>
<feature type="chain" id="PRO_0000157838" description="Uncharacterized protein SAS1797">
    <location>
        <begin position="1"/>
        <end position="171"/>
    </location>
</feature>
<feature type="domain" description="PfpI endopeptidase" evidence="1">
    <location>
        <begin position="3"/>
        <end position="171"/>
    </location>
</feature>
<proteinExistence type="inferred from homology"/>
<evidence type="ECO:0000255" key="1">
    <source>
        <dbReference type="PROSITE-ProRule" id="PRU00608"/>
    </source>
</evidence>
<evidence type="ECO:0000305" key="2"/>
<comment type="similarity">
    <text evidence="2">Belongs to the peptidase C56 family.</text>
</comment>
<organism>
    <name type="scientific">Staphylococcus aureus (strain MSSA476)</name>
    <dbReference type="NCBI Taxonomy" id="282459"/>
    <lineage>
        <taxon>Bacteria</taxon>
        <taxon>Bacillati</taxon>
        <taxon>Bacillota</taxon>
        <taxon>Bacilli</taxon>
        <taxon>Bacillales</taxon>
        <taxon>Staphylococcaceae</taxon>
        <taxon>Staphylococcus</taxon>
    </lineage>
</organism>